<dbReference type="EMBL" id="AE001363">
    <property type="protein sequence ID" value="AAD18629.1"/>
    <property type="molecule type" value="Genomic_DNA"/>
</dbReference>
<dbReference type="EMBL" id="AE002161">
    <property type="protein sequence ID" value="AAF38127.1"/>
    <property type="status" value="ALT_INIT"/>
    <property type="molecule type" value="Genomic_DNA"/>
</dbReference>
<dbReference type="EMBL" id="BA000008">
    <property type="protein sequence ID" value="BAA98695.1"/>
    <property type="molecule type" value="Genomic_DNA"/>
</dbReference>
<dbReference type="EMBL" id="AE009440">
    <property type="protein sequence ID" value="AAP98438.1"/>
    <property type="molecule type" value="Genomic_DNA"/>
</dbReference>
<dbReference type="PIR" id="A81597">
    <property type="entry name" value="A81597"/>
</dbReference>
<dbReference type="PIR" id="E86551">
    <property type="entry name" value="E86551"/>
</dbReference>
<dbReference type="PIR" id="H72071">
    <property type="entry name" value="H72071"/>
</dbReference>
<dbReference type="RefSeq" id="NP_224685.1">
    <property type="nucleotide sequence ID" value="NC_000922.1"/>
</dbReference>
<dbReference type="RefSeq" id="WP_010883127.1">
    <property type="nucleotide sequence ID" value="NZ_LN847257.1"/>
</dbReference>
<dbReference type="RefSeq" id="WP_010895332.1">
    <property type="nucleotide sequence ID" value="NZ_LN846995.1"/>
</dbReference>
<dbReference type="STRING" id="406984.CPK_ORF01006"/>
<dbReference type="GeneID" id="45050534"/>
<dbReference type="KEGG" id="cpa:CP_0265"/>
<dbReference type="KEGG" id="cpj:CPj0489"/>
<dbReference type="KEGG" id="cpn:CPn_0489"/>
<dbReference type="KEGG" id="cpt:CpB0509"/>
<dbReference type="PATRIC" id="fig|115713.3.peg.548"/>
<dbReference type="eggNOG" id="COG4286">
    <property type="taxonomic scope" value="Bacteria"/>
</dbReference>
<dbReference type="HOGENOM" id="CLU_051576_1_1_0"/>
<dbReference type="OMA" id="FHCDEVV"/>
<dbReference type="OrthoDB" id="183622at2"/>
<dbReference type="Proteomes" id="UP000000583">
    <property type="component" value="Chromosome"/>
</dbReference>
<dbReference type="Proteomes" id="UP000000801">
    <property type="component" value="Chromosome"/>
</dbReference>
<dbReference type="InterPro" id="IPR003226">
    <property type="entry name" value="MYG1_exonuclease"/>
</dbReference>
<dbReference type="PANTHER" id="PTHR11215">
    <property type="entry name" value="METAL DEPENDENT HYDROLASE - RELATED"/>
    <property type="match status" value="1"/>
</dbReference>
<dbReference type="PANTHER" id="PTHR11215:SF1">
    <property type="entry name" value="MYG1 EXONUCLEASE"/>
    <property type="match status" value="1"/>
</dbReference>
<dbReference type="Pfam" id="PF03690">
    <property type="entry name" value="MYG1_exonuc"/>
    <property type="match status" value="1"/>
</dbReference>
<name>Y489_CHLPN</name>
<comment type="similarity">
    <text evidence="1">Belongs to the MYG1 family.</text>
</comment>
<comment type="sequence caution" evidence="1">
    <conflict type="erroneous initiation">
        <sequence resource="EMBL-CDS" id="AAF38127"/>
    </conflict>
    <text>Extended N-terminus.</text>
</comment>
<reference key="1">
    <citation type="journal article" date="1999" name="Nat. Genet.">
        <title>Comparative genomes of Chlamydia pneumoniae and C. trachomatis.</title>
        <authorList>
            <person name="Kalman S."/>
            <person name="Mitchell W.P."/>
            <person name="Marathe R."/>
            <person name="Lammel C.J."/>
            <person name="Fan J."/>
            <person name="Hyman R.W."/>
            <person name="Olinger L."/>
            <person name="Grimwood J."/>
            <person name="Davis R.W."/>
            <person name="Stephens R.S."/>
        </authorList>
    </citation>
    <scope>NUCLEOTIDE SEQUENCE [LARGE SCALE GENOMIC DNA]</scope>
    <source>
        <strain>CWL029</strain>
    </source>
</reference>
<reference key="2">
    <citation type="journal article" date="2000" name="Nucleic Acids Res.">
        <title>Genome sequences of Chlamydia trachomatis MoPn and Chlamydia pneumoniae AR39.</title>
        <authorList>
            <person name="Read T.D."/>
            <person name="Brunham R.C."/>
            <person name="Shen C."/>
            <person name="Gill S.R."/>
            <person name="Heidelberg J.F."/>
            <person name="White O."/>
            <person name="Hickey E.K."/>
            <person name="Peterson J.D."/>
            <person name="Utterback T.R."/>
            <person name="Berry K.J."/>
            <person name="Bass S."/>
            <person name="Linher K.D."/>
            <person name="Weidman J.F."/>
            <person name="Khouri H.M."/>
            <person name="Craven B."/>
            <person name="Bowman C."/>
            <person name="Dodson R.J."/>
            <person name="Gwinn M.L."/>
            <person name="Nelson W.C."/>
            <person name="DeBoy R.T."/>
            <person name="Kolonay J.F."/>
            <person name="McClarty G."/>
            <person name="Salzberg S.L."/>
            <person name="Eisen J.A."/>
            <person name="Fraser C.M."/>
        </authorList>
    </citation>
    <scope>NUCLEOTIDE SEQUENCE [LARGE SCALE GENOMIC DNA]</scope>
    <source>
        <strain>AR39</strain>
    </source>
</reference>
<reference key="3">
    <citation type="journal article" date="2000" name="Nucleic Acids Res.">
        <title>Comparison of whole genome sequences of Chlamydia pneumoniae J138 from Japan and CWL029 from USA.</title>
        <authorList>
            <person name="Shirai M."/>
            <person name="Hirakawa H."/>
            <person name="Kimoto M."/>
            <person name="Tabuchi M."/>
            <person name="Kishi F."/>
            <person name="Ouchi K."/>
            <person name="Shiba T."/>
            <person name="Ishii K."/>
            <person name="Hattori M."/>
            <person name="Kuhara S."/>
            <person name="Nakazawa T."/>
        </authorList>
    </citation>
    <scope>NUCLEOTIDE SEQUENCE [LARGE SCALE GENOMIC DNA]</scope>
    <source>
        <strain>J138</strain>
    </source>
</reference>
<reference key="4">
    <citation type="submission" date="2002-05" db="EMBL/GenBank/DDBJ databases">
        <title>The genome sequence of Chlamydia pneumoniae TW183 and comparison with other Chlamydia strains based on whole genome sequence analysis.</title>
        <authorList>
            <person name="Geng M.M."/>
            <person name="Schuhmacher A."/>
            <person name="Muehldorfer I."/>
            <person name="Bensch K.W."/>
            <person name="Schaefer K.P."/>
            <person name="Schneider S."/>
            <person name="Pohl T."/>
            <person name="Essig A."/>
            <person name="Marre R."/>
            <person name="Melchers K."/>
        </authorList>
    </citation>
    <scope>NUCLEOTIDE SEQUENCE [LARGE SCALE GENOMIC DNA]</scope>
    <source>
        <strain>TW-183</strain>
    </source>
</reference>
<proteinExistence type="inferred from homology"/>
<sequence>MQIPRSIGTHDGSFHADEVTACALLIIFDLVDENKIIRSRDPVVLSKCEYVCDVGGVYSIENKRFDHHQVSYDGSWSSAGMILHYLKEFGYMDCEEYHFLNNTLVHGVDEQDNGRFFSKEGFCSFSDIIKIYNPREEEETNSDADFSCALHFTIDFLCRLRKKFQYDRVCRGIVREAMETEDMCLYFDRPLAWQENFFFLGGEKHPAAFVCFPSCDQWILRGIPPNLDRRMEVRVPFPENWAGLLGKELSKVSGIPGAVFCHKGLFLSVWTNRESCQRALRLTLQDRGII</sequence>
<gene>
    <name type="ordered locus">CPn_0489</name>
    <name type="ordered locus">CP_0265</name>
    <name type="ordered locus">CPj0489</name>
    <name type="ordered locus">CpB0509</name>
</gene>
<feature type="chain" id="PRO_0000213489" description="MYG1 protein CPn_0489/CP_0265/CPj0489/CpB0509">
    <location>
        <begin position="1"/>
        <end position="290"/>
    </location>
</feature>
<feature type="sequence conflict" description="In Ref. 1; AAD18629." evidence="1" ref="1">
    <original>E</original>
    <variation>D</variation>
    <location>
        <position position="232"/>
    </location>
</feature>
<protein>
    <recommendedName>
        <fullName>MYG1 protein CPn_0489/CP_0265/CPj0489/CpB0509</fullName>
    </recommendedName>
</protein>
<accession>Q9Z862</accession>
<accession>Q9JSE5</accession>
<accession>Q9K2B0</accession>
<organism>
    <name type="scientific">Chlamydia pneumoniae</name>
    <name type="common">Chlamydophila pneumoniae</name>
    <dbReference type="NCBI Taxonomy" id="83558"/>
    <lineage>
        <taxon>Bacteria</taxon>
        <taxon>Pseudomonadati</taxon>
        <taxon>Chlamydiota</taxon>
        <taxon>Chlamydiia</taxon>
        <taxon>Chlamydiales</taxon>
        <taxon>Chlamydiaceae</taxon>
        <taxon>Chlamydia/Chlamydophila group</taxon>
        <taxon>Chlamydia</taxon>
    </lineage>
</organism>
<evidence type="ECO:0000305" key="1"/>